<reference key="1">
    <citation type="journal article" date="2009" name="PLoS Genet.">
        <title>Organised genome dynamics in the Escherichia coli species results in highly diverse adaptive paths.</title>
        <authorList>
            <person name="Touchon M."/>
            <person name="Hoede C."/>
            <person name="Tenaillon O."/>
            <person name="Barbe V."/>
            <person name="Baeriswyl S."/>
            <person name="Bidet P."/>
            <person name="Bingen E."/>
            <person name="Bonacorsi S."/>
            <person name="Bouchier C."/>
            <person name="Bouvet O."/>
            <person name="Calteau A."/>
            <person name="Chiapello H."/>
            <person name="Clermont O."/>
            <person name="Cruveiller S."/>
            <person name="Danchin A."/>
            <person name="Diard M."/>
            <person name="Dossat C."/>
            <person name="Karoui M.E."/>
            <person name="Frapy E."/>
            <person name="Garry L."/>
            <person name="Ghigo J.M."/>
            <person name="Gilles A.M."/>
            <person name="Johnson J."/>
            <person name="Le Bouguenec C."/>
            <person name="Lescat M."/>
            <person name="Mangenot S."/>
            <person name="Martinez-Jehanne V."/>
            <person name="Matic I."/>
            <person name="Nassif X."/>
            <person name="Oztas S."/>
            <person name="Petit M.A."/>
            <person name="Pichon C."/>
            <person name="Rouy Z."/>
            <person name="Ruf C.S."/>
            <person name="Schneider D."/>
            <person name="Tourret J."/>
            <person name="Vacherie B."/>
            <person name="Vallenet D."/>
            <person name="Medigue C."/>
            <person name="Rocha E.P.C."/>
            <person name="Denamur E."/>
        </authorList>
    </citation>
    <scope>NUCLEOTIDE SEQUENCE [LARGE SCALE GENOMIC DNA]</scope>
    <source>
        <strain>ATCC 35469 / DSM 13698 / BCRC 15582 / CCUG 18766 / IAM 14443 / JCM 21226 / LMG 7866 / NBRC 102419 / NCTC 12128 / CDC 0568-73</strain>
    </source>
</reference>
<proteinExistence type="inferred from homology"/>
<name>HDFR_ESCF3</name>
<evidence type="ECO:0000255" key="1">
    <source>
        <dbReference type="HAMAP-Rule" id="MF_01233"/>
    </source>
</evidence>
<evidence type="ECO:0000305" key="2"/>
<organism>
    <name type="scientific">Escherichia fergusonii (strain ATCC 35469 / DSM 13698 / CCUG 18766 / IAM 14443 / JCM 21226 / LMG 7866 / NBRC 102419 / NCTC 12128 / CDC 0568-73)</name>
    <dbReference type="NCBI Taxonomy" id="585054"/>
    <lineage>
        <taxon>Bacteria</taxon>
        <taxon>Pseudomonadati</taxon>
        <taxon>Pseudomonadota</taxon>
        <taxon>Gammaproteobacteria</taxon>
        <taxon>Enterobacterales</taxon>
        <taxon>Enterobacteriaceae</taxon>
        <taxon>Escherichia</taxon>
    </lineage>
</organism>
<sequence>MDTELLKTFLEVSRTRHFGRAAESLYLTQSAVSFRIRQLENQLGVNLFTRHRNNIRLTAAGEKLLPYAETLMSTWQAARKEVAHTSRHNEFSIGASASLWECMLNQWLGRLYQNQDTHTGLQFEARIAQRQSLVKQLHERQLDLLITTEAPKMDEFSSQLLGYFTLALYTSAPSKLKGDLNYLRLEWGPDFQQHEAGLIGTDEVPILTTSSAELAQQQIAMLNGCTWLPVSWARKKGGLHTVVDSTTLSRPLYAIWLQNSDKHALIRDLLKINVLDEVY</sequence>
<keyword id="KW-0238">DNA-binding</keyword>
<keyword id="KW-0678">Repressor</keyword>
<keyword id="KW-0804">Transcription</keyword>
<keyword id="KW-0805">Transcription regulation</keyword>
<protein>
    <recommendedName>
        <fullName evidence="1">HTH-type transcriptional regulator HdfR</fullName>
    </recommendedName>
    <alternativeName>
        <fullName evidence="1">H-NS-dependent flhDC regulator</fullName>
    </alternativeName>
</protein>
<dbReference type="EMBL" id="CU928158">
    <property type="protein sequence ID" value="CAQ91198.1"/>
    <property type="molecule type" value="Genomic_DNA"/>
</dbReference>
<dbReference type="RefSeq" id="WP_000379255.1">
    <property type="nucleotide sequence ID" value="NC_011740.1"/>
</dbReference>
<dbReference type="SMR" id="B7LUJ5"/>
<dbReference type="GeneID" id="75059654"/>
<dbReference type="KEGG" id="efe:EFER_3738"/>
<dbReference type="HOGENOM" id="CLU_039613_8_2_6"/>
<dbReference type="OrthoDB" id="9786526at2"/>
<dbReference type="Proteomes" id="UP000000745">
    <property type="component" value="Chromosome"/>
</dbReference>
<dbReference type="GO" id="GO:0003677">
    <property type="term" value="F:DNA binding"/>
    <property type="evidence" value="ECO:0007669"/>
    <property type="project" value="UniProtKB-KW"/>
</dbReference>
<dbReference type="GO" id="GO:0003700">
    <property type="term" value="F:DNA-binding transcription factor activity"/>
    <property type="evidence" value="ECO:0007669"/>
    <property type="project" value="UniProtKB-UniRule"/>
</dbReference>
<dbReference type="GO" id="GO:0045892">
    <property type="term" value="P:negative regulation of DNA-templated transcription"/>
    <property type="evidence" value="ECO:0007669"/>
    <property type="project" value="UniProtKB-UniRule"/>
</dbReference>
<dbReference type="FunFam" id="1.10.10.10:FF:000001">
    <property type="entry name" value="LysR family transcriptional regulator"/>
    <property type="match status" value="1"/>
</dbReference>
<dbReference type="Gene3D" id="3.40.190.10">
    <property type="entry name" value="Periplasmic binding protein-like II"/>
    <property type="match status" value="2"/>
</dbReference>
<dbReference type="Gene3D" id="1.10.10.10">
    <property type="entry name" value="Winged helix-like DNA-binding domain superfamily/Winged helix DNA-binding domain"/>
    <property type="match status" value="1"/>
</dbReference>
<dbReference type="HAMAP" id="MF_01233">
    <property type="entry name" value="HTH_type_HdfR"/>
    <property type="match status" value="1"/>
</dbReference>
<dbReference type="InterPro" id="IPR050176">
    <property type="entry name" value="LTTR"/>
</dbReference>
<dbReference type="InterPro" id="IPR005119">
    <property type="entry name" value="LysR_subst-bd"/>
</dbReference>
<dbReference type="InterPro" id="IPR020890">
    <property type="entry name" value="Tscrpt_reg_HTH_HdfR"/>
</dbReference>
<dbReference type="InterPro" id="IPR000847">
    <property type="entry name" value="Tscrpt_reg_HTH_LysR"/>
</dbReference>
<dbReference type="InterPro" id="IPR036388">
    <property type="entry name" value="WH-like_DNA-bd_sf"/>
</dbReference>
<dbReference type="InterPro" id="IPR036390">
    <property type="entry name" value="WH_DNA-bd_sf"/>
</dbReference>
<dbReference type="NCBIfam" id="NF002946">
    <property type="entry name" value="PRK03601.1"/>
    <property type="match status" value="1"/>
</dbReference>
<dbReference type="PANTHER" id="PTHR30579:SF8">
    <property type="entry name" value="HTH-TYPE TRANSCRIPTIONAL REGULATOR HDFR"/>
    <property type="match status" value="1"/>
</dbReference>
<dbReference type="PANTHER" id="PTHR30579">
    <property type="entry name" value="TRANSCRIPTIONAL REGULATOR"/>
    <property type="match status" value="1"/>
</dbReference>
<dbReference type="Pfam" id="PF00126">
    <property type="entry name" value="HTH_1"/>
    <property type="match status" value="1"/>
</dbReference>
<dbReference type="Pfam" id="PF03466">
    <property type="entry name" value="LysR_substrate"/>
    <property type="match status" value="1"/>
</dbReference>
<dbReference type="PRINTS" id="PR00039">
    <property type="entry name" value="HTHLYSR"/>
</dbReference>
<dbReference type="SUPFAM" id="SSF53850">
    <property type="entry name" value="Periplasmic binding protein-like II"/>
    <property type="match status" value="1"/>
</dbReference>
<dbReference type="SUPFAM" id="SSF46785">
    <property type="entry name" value="Winged helix' DNA-binding domain"/>
    <property type="match status" value="1"/>
</dbReference>
<dbReference type="PROSITE" id="PS50931">
    <property type="entry name" value="HTH_LYSR"/>
    <property type="match status" value="1"/>
</dbReference>
<comment type="function">
    <text evidence="1">Negatively regulates the transcription of the flagellar master operon flhDC by binding to the upstream region of the operon.</text>
</comment>
<comment type="similarity">
    <text evidence="2">Belongs to the LysR transcriptional regulatory family.</text>
</comment>
<gene>
    <name evidence="1" type="primary">hdfR</name>
    <name type="ordered locus">EFER_3738</name>
</gene>
<accession>B7LUJ5</accession>
<feature type="chain" id="PRO_1000139670" description="HTH-type transcriptional regulator HdfR">
    <location>
        <begin position="1"/>
        <end position="279"/>
    </location>
</feature>
<feature type="domain" description="HTH lysR-type" evidence="1">
    <location>
        <begin position="1"/>
        <end position="58"/>
    </location>
</feature>
<feature type="DNA-binding region" description="H-T-H motif" evidence="1">
    <location>
        <begin position="18"/>
        <end position="37"/>
    </location>
</feature>